<keyword id="KW-0963">Cytoplasm</keyword>
<keyword id="KW-0328">Glycosyltransferase</keyword>
<keyword id="KW-0660">Purine salvage</keyword>
<keyword id="KW-0808">Transferase</keyword>
<dbReference type="EC" id="2.4.2.7" evidence="1"/>
<dbReference type="EMBL" id="CP001600">
    <property type="protein sequence ID" value="ACR68318.1"/>
    <property type="molecule type" value="Genomic_DNA"/>
</dbReference>
<dbReference type="RefSeq" id="WP_015870497.1">
    <property type="nucleotide sequence ID" value="NZ_CP169062.1"/>
</dbReference>
<dbReference type="SMR" id="C5BCZ7"/>
<dbReference type="STRING" id="67780.B6E78_15900"/>
<dbReference type="GeneID" id="69538140"/>
<dbReference type="KEGG" id="eic:NT01EI_1107"/>
<dbReference type="PATRIC" id="fig|634503.3.peg.1005"/>
<dbReference type="HOGENOM" id="CLU_063339_3_0_6"/>
<dbReference type="OrthoDB" id="9803963at2"/>
<dbReference type="UniPathway" id="UPA00588">
    <property type="reaction ID" value="UER00646"/>
</dbReference>
<dbReference type="Proteomes" id="UP000001485">
    <property type="component" value="Chromosome"/>
</dbReference>
<dbReference type="GO" id="GO:0005737">
    <property type="term" value="C:cytoplasm"/>
    <property type="evidence" value="ECO:0007669"/>
    <property type="project" value="UniProtKB-SubCell"/>
</dbReference>
<dbReference type="GO" id="GO:0002055">
    <property type="term" value="F:adenine binding"/>
    <property type="evidence" value="ECO:0007669"/>
    <property type="project" value="TreeGrafter"/>
</dbReference>
<dbReference type="GO" id="GO:0003999">
    <property type="term" value="F:adenine phosphoribosyltransferase activity"/>
    <property type="evidence" value="ECO:0007669"/>
    <property type="project" value="UniProtKB-UniRule"/>
</dbReference>
<dbReference type="GO" id="GO:0016208">
    <property type="term" value="F:AMP binding"/>
    <property type="evidence" value="ECO:0007669"/>
    <property type="project" value="TreeGrafter"/>
</dbReference>
<dbReference type="GO" id="GO:0006168">
    <property type="term" value="P:adenine salvage"/>
    <property type="evidence" value="ECO:0007669"/>
    <property type="project" value="InterPro"/>
</dbReference>
<dbReference type="GO" id="GO:0044209">
    <property type="term" value="P:AMP salvage"/>
    <property type="evidence" value="ECO:0007669"/>
    <property type="project" value="UniProtKB-UniRule"/>
</dbReference>
<dbReference type="GO" id="GO:0006166">
    <property type="term" value="P:purine ribonucleoside salvage"/>
    <property type="evidence" value="ECO:0007669"/>
    <property type="project" value="UniProtKB-KW"/>
</dbReference>
<dbReference type="CDD" id="cd06223">
    <property type="entry name" value="PRTases_typeI"/>
    <property type="match status" value="1"/>
</dbReference>
<dbReference type="FunFam" id="3.40.50.2020:FF:000004">
    <property type="entry name" value="Adenine phosphoribosyltransferase"/>
    <property type="match status" value="1"/>
</dbReference>
<dbReference type="Gene3D" id="3.40.50.2020">
    <property type="match status" value="1"/>
</dbReference>
<dbReference type="HAMAP" id="MF_00004">
    <property type="entry name" value="Aden_phosphoribosyltr"/>
    <property type="match status" value="1"/>
</dbReference>
<dbReference type="InterPro" id="IPR005764">
    <property type="entry name" value="Ade_phspho_trans"/>
</dbReference>
<dbReference type="InterPro" id="IPR000836">
    <property type="entry name" value="PRibTrfase_dom"/>
</dbReference>
<dbReference type="InterPro" id="IPR029057">
    <property type="entry name" value="PRTase-like"/>
</dbReference>
<dbReference type="InterPro" id="IPR050054">
    <property type="entry name" value="UPRTase/APRTase"/>
</dbReference>
<dbReference type="NCBIfam" id="TIGR01090">
    <property type="entry name" value="apt"/>
    <property type="match status" value="1"/>
</dbReference>
<dbReference type="NCBIfam" id="NF002632">
    <property type="entry name" value="PRK02304.1-1"/>
    <property type="match status" value="1"/>
</dbReference>
<dbReference type="NCBIfam" id="NF002634">
    <property type="entry name" value="PRK02304.1-3"/>
    <property type="match status" value="1"/>
</dbReference>
<dbReference type="NCBIfam" id="NF002636">
    <property type="entry name" value="PRK02304.1-5"/>
    <property type="match status" value="1"/>
</dbReference>
<dbReference type="PANTHER" id="PTHR32315">
    <property type="entry name" value="ADENINE PHOSPHORIBOSYLTRANSFERASE"/>
    <property type="match status" value="1"/>
</dbReference>
<dbReference type="PANTHER" id="PTHR32315:SF3">
    <property type="entry name" value="ADENINE PHOSPHORIBOSYLTRANSFERASE"/>
    <property type="match status" value="1"/>
</dbReference>
<dbReference type="Pfam" id="PF00156">
    <property type="entry name" value="Pribosyltran"/>
    <property type="match status" value="1"/>
</dbReference>
<dbReference type="SUPFAM" id="SSF53271">
    <property type="entry name" value="PRTase-like"/>
    <property type="match status" value="1"/>
</dbReference>
<dbReference type="PROSITE" id="PS00103">
    <property type="entry name" value="PUR_PYR_PR_TRANSFER"/>
    <property type="match status" value="1"/>
</dbReference>
<proteinExistence type="inferred from homology"/>
<organism>
    <name type="scientific">Edwardsiella ictaluri (strain 93-146)</name>
    <dbReference type="NCBI Taxonomy" id="634503"/>
    <lineage>
        <taxon>Bacteria</taxon>
        <taxon>Pseudomonadati</taxon>
        <taxon>Pseudomonadota</taxon>
        <taxon>Gammaproteobacteria</taxon>
        <taxon>Enterobacterales</taxon>
        <taxon>Hafniaceae</taxon>
        <taxon>Edwardsiella</taxon>
    </lineage>
</organism>
<sequence length="183" mass="19698">MTATAQQLEFLKQNIKTIPDYPKPGILFRDVTSLLEKPDAYALSIELLAARYRAAGITKVVGTEARGFLFGAPVALALGVGFVPVRKPGKLPRATLAESYALEYGTDTLEIHQDAIDANDRVLMVDDLLATGGTIEATTRLIRRLGGVVHDAAFIIDLPALGGEARLEAMNINCYSLVSFDGH</sequence>
<name>APT_EDWI9</name>
<gene>
    <name evidence="1" type="primary">apt</name>
    <name type="ordered locus">NT01EI_1107</name>
</gene>
<evidence type="ECO:0000255" key="1">
    <source>
        <dbReference type="HAMAP-Rule" id="MF_00004"/>
    </source>
</evidence>
<feature type="chain" id="PRO_1000201662" description="Adenine phosphoribosyltransferase">
    <location>
        <begin position="1"/>
        <end position="183"/>
    </location>
</feature>
<protein>
    <recommendedName>
        <fullName evidence="1">Adenine phosphoribosyltransferase</fullName>
        <shortName evidence="1">APRT</shortName>
        <ecNumber evidence="1">2.4.2.7</ecNumber>
    </recommendedName>
</protein>
<accession>C5BCZ7</accession>
<comment type="function">
    <text evidence="1">Catalyzes a salvage reaction resulting in the formation of AMP, that is energically less costly than de novo synthesis.</text>
</comment>
<comment type="catalytic activity">
    <reaction evidence="1">
        <text>AMP + diphosphate = 5-phospho-alpha-D-ribose 1-diphosphate + adenine</text>
        <dbReference type="Rhea" id="RHEA:16609"/>
        <dbReference type="ChEBI" id="CHEBI:16708"/>
        <dbReference type="ChEBI" id="CHEBI:33019"/>
        <dbReference type="ChEBI" id="CHEBI:58017"/>
        <dbReference type="ChEBI" id="CHEBI:456215"/>
        <dbReference type="EC" id="2.4.2.7"/>
    </reaction>
</comment>
<comment type="pathway">
    <text evidence="1">Purine metabolism; AMP biosynthesis via salvage pathway; AMP from adenine: step 1/1.</text>
</comment>
<comment type="subunit">
    <text evidence="1">Homodimer.</text>
</comment>
<comment type="subcellular location">
    <subcellularLocation>
        <location evidence="1">Cytoplasm</location>
    </subcellularLocation>
</comment>
<comment type="similarity">
    <text evidence="1">Belongs to the purine/pyrimidine phosphoribosyltransferase family.</text>
</comment>
<reference key="1">
    <citation type="submission" date="2009-03" db="EMBL/GenBank/DDBJ databases">
        <title>Complete genome sequence of Edwardsiella ictaluri 93-146.</title>
        <authorList>
            <person name="Williams M.L."/>
            <person name="Gillaspy A.F."/>
            <person name="Dyer D.W."/>
            <person name="Thune R.L."/>
            <person name="Waldbieser G.C."/>
            <person name="Schuster S.C."/>
            <person name="Gipson J."/>
            <person name="Zaitshik J."/>
            <person name="Landry C."/>
            <person name="Lawrence M.L."/>
        </authorList>
    </citation>
    <scope>NUCLEOTIDE SEQUENCE [LARGE SCALE GENOMIC DNA]</scope>
    <source>
        <strain>93-146</strain>
    </source>
</reference>